<evidence type="ECO:0000250" key="1"/>
<evidence type="ECO:0000305" key="2"/>
<proteinExistence type="evidence at protein level"/>
<dbReference type="EC" id="6.3.5.-"/>
<dbReference type="EMBL" id="BA000018">
    <property type="protein sequence ID" value="BAB42987.1"/>
    <property type="molecule type" value="Genomic_DNA"/>
</dbReference>
<dbReference type="PIR" id="D89978">
    <property type="entry name" value="D89978"/>
</dbReference>
<dbReference type="RefSeq" id="WP_000170162.1">
    <property type="nucleotide sequence ID" value="NC_002745.2"/>
</dbReference>
<dbReference type="SMR" id="P68808"/>
<dbReference type="EnsemblBacteria" id="BAB42987">
    <property type="protein sequence ID" value="BAB42987"/>
    <property type="gene ID" value="BAB42987"/>
</dbReference>
<dbReference type="GeneID" id="98346286"/>
<dbReference type="KEGG" id="sau:SA1717"/>
<dbReference type="HOGENOM" id="CLU_105899_1_2_9"/>
<dbReference type="GO" id="GO:0050566">
    <property type="term" value="F:asparaginyl-tRNA synthase (glutamine-hydrolyzing) activity"/>
    <property type="evidence" value="ECO:0007669"/>
    <property type="project" value="RHEA"/>
</dbReference>
<dbReference type="GO" id="GO:0005524">
    <property type="term" value="F:ATP binding"/>
    <property type="evidence" value="ECO:0007669"/>
    <property type="project" value="UniProtKB-KW"/>
</dbReference>
<dbReference type="GO" id="GO:0050567">
    <property type="term" value="F:glutaminyl-tRNA synthase (glutamine-hydrolyzing) activity"/>
    <property type="evidence" value="ECO:0007669"/>
    <property type="project" value="UniProtKB-UniRule"/>
</dbReference>
<dbReference type="GO" id="GO:0070681">
    <property type="term" value="P:glutaminyl-tRNAGln biosynthesis via transamidation"/>
    <property type="evidence" value="ECO:0007669"/>
    <property type="project" value="TreeGrafter"/>
</dbReference>
<dbReference type="GO" id="GO:0006450">
    <property type="term" value="P:regulation of translational fidelity"/>
    <property type="evidence" value="ECO:0007669"/>
    <property type="project" value="InterPro"/>
</dbReference>
<dbReference type="GO" id="GO:0006412">
    <property type="term" value="P:translation"/>
    <property type="evidence" value="ECO:0007669"/>
    <property type="project" value="UniProtKB-UniRule"/>
</dbReference>
<dbReference type="Gene3D" id="1.10.20.60">
    <property type="entry name" value="Glu-tRNAGln amidotransferase C subunit, N-terminal domain"/>
    <property type="match status" value="1"/>
</dbReference>
<dbReference type="HAMAP" id="MF_00122">
    <property type="entry name" value="GatC"/>
    <property type="match status" value="1"/>
</dbReference>
<dbReference type="InterPro" id="IPR036113">
    <property type="entry name" value="Asp/Glu-ADT_sf_sub_c"/>
</dbReference>
<dbReference type="InterPro" id="IPR003837">
    <property type="entry name" value="GatC"/>
</dbReference>
<dbReference type="NCBIfam" id="TIGR00135">
    <property type="entry name" value="gatC"/>
    <property type="match status" value="1"/>
</dbReference>
<dbReference type="PANTHER" id="PTHR15004">
    <property type="entry name" value="GLUTAMYL-TRNA(GLN) AMIDOTRANSFERASE SUBUNIT C, MITOCHONDRIAL"/>
    <property type="match status" value="1"/>
</dbReference>
<dbReference type="PANTHER" id="PTHR15004:SF0">
    <property type="entry name" value="GLUTAMYL-TRNA(GLN) AMIDOTRANSFERASE SUBUNIT C, MITOCHONDRIAL"/>
    <property type="match status" value="1"/>
</dbReference>
<dbReference type="Pfam" id="PF02686">
    <property type="entry name" value="GatC"/>
    <property type="match status" value="1"/>
</dbReference>
<dbReference type="SUPFAM" id="SSF141000">
    <property type="entry name" value="Glu-tRNAGln amidotransferase C subunit"/>
    <property type="match status" value="1"/>
</dbReference>
<feature type="chain" id="PRO_0000105331" description="Aspartyl/glutamyl-tRNA(Asn/Gln) amidotransferase subunit C">
    <location>
        <begin position="1"/>
        <end position="100"/>
    </location>
</feature>
<accession>P68808</accession>
<accession>Q9RF08</accession>
<organism>
    <name type="scientific">Staphylococcus aureus (strain N315)</name>
    <dbReference type="NCBI Taxonomy" id="158879"/>
    <lineage>
        <taxon>Bacteria</taxon>
        <taxon>Bacillati</taxon>
        <taxon>Bacillota</taxon>
        <taxon>Bacilli</taxon>
        <taxon>Bacillales</taxon>
        <taxon>Staphylococcaceae</taxon>
        <taxon>Staphylococcus</taxon>
    </lineage>
</organism>
<name>GATC_STAAN</name>
<sequence length="100" mass="11268">MTKVTREEVEHIANLARLQISPEETEEMANTLESILDFAKQNDSADTEGVEPTYHVLDLQNVLREDKAIKGIPQELALKNAKETEDGQFKVPTIMNEEDA</sequence>
<protein>
    <recommendedName>
        <fullName>Aspartyl/glutamyl-tRNA(Asn/Gln) amidotransferase subunit C</fullName>
        <shortName>Asp/Glu-ADT subunit C</shortName>
        <ecNumber>6.3.5.-</ecNumber>
    </recommendedName>
</protein>
<keyword id="KW-0067">ATP-binding</keyword>
<keyword id="KW-0436">Ligase</keyword>
<keyword id="KW-0547">Nucleotide-binding</keyword>
<keyword id="KW-0648">Protein biosynthesis</keyword>
<gene>
    <name type="primary">gatC</name>
    <name type="ordered locus">SA1717</name>
</gene>
<reference key="1">
    <citation type="journal article" date="2001" name="Lancet">
        <title>Whole genome sequencing of meticillin-resistant Staphylococcus aureus.</title>
        <authorList>
            <person name="Kuroda M."/>
            <person name="Ohta T."/>
            <person name="Uchiyama I."/>
            <person name="Baba T."/>
            <person name="Yuzawa H."/>
            <person name="Kobayashi I."/>
            <person name="Cui L."/>
            <person name="Oguchi A."/>
            <person name="Aoki K."/>
            <person name="Nagai Y."/>
            <person name="Lian J.-Q."/>
            <person name="Ito T."/>
            <person name="Kanamori M."/>
            <person name="Matsumaru H."/>
            <person name="Maruyama A."/>
            <person name="Murakami H."/>
            <person name="Hosoyama A."/>
            <person name="Mizutani-Ui Y."/>
            <person name="Takahashi N.K."/>
            <person name="Sawano T."/>
            <person name="Inoue R."/>
            <person name="Kaito C."/>
            <person name="Sekimizu K."/>
            <person name="Hirakawa H."/>
            <person name="Kuhara S."/>
            <person name="Goto S."/>
            <person name="Yabuzaki J."/>
            <person name="Kanehisa M."/>
            <person name="Yamashita A."/>
            <person name="Oshima K."/>
            <person name="Furuya K."/>
            <person name="Yoshino C."/>
            <person name="Shiba T."/>
            <person name="Hattori M."/>
            <person name="Ogasawara N."/>
            <person name="Hayashi H."/>
            <person name="Hiramatsu K."/>
        </authorList>
    </citation>
    <scope>NUCLEOTIDE SEQUENCE [LARGE SCALE GENOMIC DNA]</scope>
    <source>
        <strain>N315</strain>
    </source>
</reference>
<reference key="2">
    <citation type="submission" date="2007-10" db="UniProtKB">
        <title>Shotgun proteomic analysis of total and membrane protein extracts of S. aureus strain N315.</title>
        <authorList>
            <person name="Vaezzadeh A.R."/>
            <person name="Deshusses J."/>
            <person name="Lescuyer P."/>
            <person name="Hochstrasser D.F."/>
        </authorList>
    </citation>
    <scope>IDENTIFICATION BY MASS SPECTROMETRY [LARGE SCALE ANALYSIS]</scope>
    <source>
        <strain>N315</strain>
    </source>
</reference>
<comment type="function">
    <text evidence="1">Allows the formation of correctly charged Asn-tRNA(Asn) or Gln-tRNA(Gln) through the transamidation of misacylated Asp-tRNA(Asn) or Glu-tRNA(Gln) in organisms which lack either or both of asparaginyl-tRNA or glutaminyl-tRNA synthetases. The reaction takes place in the presence of glutamine and ATP through an activated phospho-Asp-tRNA(Asn) or phospho-Glu-tRNA(Gln) (By similarity).</text>
</comment>
<comment type="catalytic activity">
    <reaction>
        <text>L-glutamyl-tRNA(Gln) + L-glutamine + ATP + H2O = L-glutaminyl-tRNA(Gln) + L-glutamate + ADP + phosphate + H(+)</text>
        <dbReference type="Rhea" id="RHEA:17521"/>
        <dbReference type="Rhea" id="RHEA-COMP:9681"/>
        <dbReference type="Rhea" id="RHEA-COMP:9684"/>
        <dbReference type="ChEBI" id="CHEBI:15377"/>
        <dbReference type="ChEBI" id="CHEBI:15378"/>
        <dbReference type="ChEBI" id="CHEBI:29985"/>
        <dbReference type="ChEBI" id="CHEBI:30616"/>
        <dbReference type="ChEBI" id="CHEBI:43474"/>
        <dbReference type="ChEBI" id="CHEBI:58359"/>
        <dbReference type="ChEBI" id="CHEBI:78520"/>
        <dbReference type="ChEBI" id="CHEBI:78521"/>
        <dbReference type="ChEBI" id="CHEBI:456216"/>
    </reaction>
</comment>
<comment type="catalytic activity">
    <reaction>
        <text>L-aspartyl-tRNA(Asn) + L-glutamine + ATP + H2O = L-asparaginyl-tRNA(Asn) + L-glutamate + ADP + phosphate + 2 H(+)</text>
        <dbReference type="Rhea" id="RHEA:14513"/>
        <dbReference type="Rhea" id="RHEA-COMP:9674"/>
        <dbReference type="Rhea" id="RHEA-COMP:9677"/>
        <dbReference type="ChEBI" id="CHEBI:15377"/>
        <dbReference type="ChEBI" id="CHEBI:15378"/>
        <dbReference type="ChEBI" id="CHEBI:29985"/>
        <dbReference type="ChEBI" id="CHEBI:30616"/>
        <dbReference type="ChEBI" id="CHEBI:43474"/>
        <dbReference type="ChEBI" id="CHEBI:58359"/>
        <dbReference type="ChEBI" id="CHEBI:78515"/>
        <dbReference type="ChEBI" id="CHEBI:78516"/>
        <dbReference type="ChEBI" id="CHEBI:456216"/>
    </reaction>
</comment>
<comment type="subunit">
    <text evidence="1">Heterotrimer of A, B and C subunits.</text>
</comment>
<comment type="similarity">
    <text evidence="2">Belongs to the GatC family.</text>
</comment>